<accession>A4GCK2</accession>
<protein>
    <recommendedName>
        <fullName evidence="1">Nuclear export protein</fullName>
        <shortName evidence="1">NEP</shortName>
    </recommendedName>
    <alternativeName>
        <fullName evidence="1">Non-structural protein 2</fullName>
        <shortName evidence="1">NS2</shortName>
    </alternativeName>
</protein>
<proteinExistence type="inferred from homology"/>
<dbReference type="EMBL" id="CY020457">
    <property type="protein sequence ID" value="ABO38368.1"/>
    <property type="molecule type" value="Viral_cRNA"/>
</dbReference>
<dbReference type="SMR" id="A4GCK2"/>
<dbReference type="Proteomes" id="UP000008580">
    <property type="component" value="Genome"/>
</dbReference>
<dbReference type="GO" id="GO:0042025">
    <property type="term" value="C:host cell nucleus"/>
    <property type="evidence" value="ECO:0007669"/>
    <property type="project" value="UniProtKB-SubCell"/>
</dbReference>
<dbReference type="GO" id="GO:0044423">
    <property type="term" value="C:virion component"/>
    <property type="evidence" value="ECO:0007669"/>
    <property type="project" value="UniProtKB-UniRule"/>
</dbReference>
<dbReference type="GO" id="GO:0039675">
    <property type="term" value="P:exit of virus from host cell nucleus through nuclear pore"/>
    <property type="evidence" value="ECO:0007669"/>
    <property type="project" value="UniProtKB-UniRule"/>
</dbReference>
<dbReference type="Gene3D" id="1.10.287.230">
    <property type="match status" value="1"/>
</dbReference>
<dbReference type="Gene3D" id="1.10.287.10">
    <property type="entry name" value="S15/NS1, RNA-binding"/>
    <property type="match status" value="1"/>
</dbReference>
<dbReference type="HAMAP" id="MF_04067">
    <property type="entry name" value="INFV_NEP"/>
    <property type="match status" value="1"/>
</dbReference>
<dbReference type="InterPro" id="IPR000968">
    <property type="entry name" value="Flu_NS2"/>
</dbReference>
<dbReference type="Pfam" id="PF00601">
    <property type="entry name" value="Flu_NS2"/>
    <property type="match status" value="1"/>
</dbReference>
<dbReference type="SUPFAM" id="SSF101156">
    <property type="entry name" value="Nonstructural protein ns2, Nep, M1-binding domain"/>
    <property type="match status" value="1"/>
</dbReference>
<organismHost>
    <name type="scientific">Aves</name>
    <dbReference type="NCBI Taxonomy" id="8782"/>
</organismHost>
<organismHost>
    <name type="scientific">Homo sapiens</name>
    <name type="common">Human</name>
    <dbReference type="NCBI Taxonomy" id="9606"/>
</organismHost>
<organismHost>
    <name type="scientific">Sus scrofa</name>
    <name type="common">Pig</name>
    <dbReference type="NCBI Taxonomy" id="9823"/>
</organismHost>
<gene>
    <name evidence="1" type="primary">NS</name>
</gene>
<evidence type="ECO:0000255" key="1">
    <source>
        <dbReference type="HAMAP-Rule" id="MF_04067"/>
    </source>
</evidence>
<reference key="1">
    <citation type="submission" date="2007-03" db="EMBL/GenBank/DDBJ databases">
        <title>The NIAID influenza genome sequencing project.</title>
        <authorList>
            <person name="Ghedin E."/>
            <person name="Spiro D."/>
            <person name="Miller N."/>
            <person name="Zaborsky J."/>
            <person name="Feldblyum T."/>
            <person name="Subbu V."/>
            <person name="Shumway M."/>
            <person name="Sparenborg J."/>
            <person name="Groveman L."/>
            <person name="Halpin R."/>
            <person name="Sitz J."/>
            <person name="Koo H."/>
            <person name="Salzberg S.L."/>
            <person name="Webster R.G."/>
            <person name="Hoffmann E."/>
            <person name="Krauss S."/>
            <person name="Naeve C."/>
            <person name="Bao Y."/>
            <person name="Bolotov P."/>
            <person name="Dernovoy D."/>
            <person name="Kiryutin B."/>
            <person name="Lipman D.J."/>
            <person name="Tatusova T."/>
        </authorList>
    </citation>
    <scope>NUCLEOTIDE SEQUENCE [GENOMIC RNA]</scope>
</reference>
<reference key="2">
    <citation type="submission" date="2007-03" db="EMBL/GenBank/DDBJ databases">
        <authorList>
            <consortium name="The NIAID Influenza Genome Sequencing Consortium"/>
        </authorList>
    </citation>
    <scope>NUCLEOTIDE SEQUENCE [GENOMIC RNA]</scope>
</reference>
<comment type="function">
    <text evidence="1">Mediates the nuclear export of encapsidated genomic RNAs (ribonucleoproteins, RNPs). Acts as an adapter between viral RNPs complexes and the nuclear export machinery of the cell. Possesses no intrinsic RNA-binding activity, but includes a C-terminal M1-binding domain. This domain is believed to allow recognition of RNPs bound to the protein M1. Since protein M1 is not available in large quantities before late stages of infection, such an indirect recognition mechanism probably ensures that genomic RNPs are not exported from the host nucleus until sufficient quantities of viral mRNA and progeny genomic RNA have been synthesized. Furthermore, the RNPs enter the host cytoplasm only when associated with the M1 protein that is necessary to guide them to the plasma membrane. May down-regulate viral RNA synthesis when overproduced.</text>
</comment>
<comment type="subunit">
    <text evidence="1">Interacts with protein M1. May interact with host nucleoporin RAB/HRB and exportin XPO1/CRM1.</text>
</comment>
<comment type="subcellular location">
    <subcellularLocation>
        <location evidence="1">Virion</location>
    </subcellularLocation>
    <subcellularLocation>
        <location evidence="1">Host nucleus</location>
    </subcellularLocation>
</comment>
<comment type="alternative products">
    <event type="alternative splicing"/>
    <isoform>
        <id>A4GCK2-1</id>
        <name>NEP</name>
        <name>NS2</name>
        <sequence type="displayed"/>
    </isoform>
    <isoform>
        <id>A4GCK3-1</id>
        <name>NS1</name>
        <sequence type="external"/>
    </isoform>
</comment>
<comment type="miscellaneous">
    <text>Average number present in a viral particle is estimated to be 130-200 molecules.</text>
</comment>
<comment type="similarity">
    <text evidence="1">Belongs to the influenza viruses NEP family.</text>
</comment>
<feature type="chain" id="PRO_0000372958" description="Nuclear export protein">
    <location>
        <begin position="1"/>
        <end position="121"/>
    </location>
</feature>
<feature type="short sequence motif" description="Nuclear export signal" evidence="1">
    <location>
        <begin position="12"/>
        <end position="21"/>
    </location>
</feature>
<feature type="short sequence motif" description="Nuclear export signal" evidence="1">
    <location>
        <begin position="85"/>
        <end position="94"/>
    </location>
</feature>
<name>NEP_I80AA</name>
<organism>
    <name type="scientific">Influenza A virus (strain A/India/6263/1980 H1N1)</name>
    <dbReference type="NCBI Taxonomy" id="393562"/>
    <lineage>
        <taxon>Viruses</taxon>
        <taxon>Riboviria</taxon>
        <taxon>Orthornavirae</taxon>
        <taxon>Negarnaviricota</taxon>
        <taxon>Polyploviricotina</taxon>
        <taxon>Insthoviricetes</taxon>
        <taxon>Articulavirales</taxon>
        <taxon>Orthomyxoviridae</taxon>
        <taxon>Alphainfluenzavirus</taxon>
        <taxon>Alphainfluenzavirus influenzae</taxon>
        <taxon>Influenza A virus</taxon>
    </lineage>
</organism>
<keyword id="KW-0025">Alternative splicing</keyword>
<keyword id="KW-1048">Host nucleus</keyword>
<keyword id="KW-0945">Host-virus interaction</keyword>
<keyword id="KW-0813">Transport</keyword>
<keyword id="KW-0946">Virion</keyword>
<sequence length="121" mass="14351">MDPNTVSSFQDILMRMSKMQLGSSSEDLNGMITQFESLKLYRDSLGKAVMRMGDLHSLQNRNGKWREQLGQKFEEIRWLIEEVRHKLKITENSFEQITFMQALQLLFEVEQEIRTFSFQLI</sequence>